<evidence type="ECO:0000255" key="1">
    <source>
        <dbReference type="HAMAP-Rule" id="MF_00736"/>
    </source>
</evidence>
<evidence type="ECO:0000305" key="2"/>
<keyword id="KW-0488">Methylation</keyword>
<keyword id="KW-0687">Ribonucleoprotein</keyword>
<keyword id="KW-0689">Ribosomal protein</keyword>
<keyword id="KW-0694">RNA-binding</keyword>
<keyword id="KW-0699">rRNA-binding</keyword>
<protein>
    <recommendedName>
        <fullName evidence="1">Large ribosomal subunit protein uL11</fullName>
    </recommendedName>
    <alternativeName>
        <fullName evidence="2">50S ribosomal protein L11</fullName>
    </alternativeName>
</protein>
<gene>
    <name evidence="1" type="primary">rplK</name>
    <name type="ordered locus">Tcr_0284</name>
</gene>
<organism>
    <name type="scientific">Hydrogenovibrio crunogenus (strain DSM 25203 / XCL-2)</name>
    <name type="common">Thiomicrospira crunogena</name>
    <dbReference type="NCBI Taxonomy" id="317025"/>
    <lineage>
        <taxon>Bacteria</taxon>
        <taxon>Pseudomonadati</taxon>
        <taxon>Pseudomonadota</taxon>
        <taxon>Gammaproteobacteria</taxon>
        <taxon>Thiotrichales</taxon>
        <taxon>Piscirickettsiaceae</taxon>
        <taxon>Hydrogenovibrio</taxon>
    </lineage>
</organism>
<sequence length="142" mass="14947">MAKKIEAYIKLQVPAGNANPSPPVGPALGQHGVNIMEFCKAFNAQTQSMEKNLPVPVVITVFNDRSFTFITKTPPASVLLKKAAGIQKGSGVPNMDKVGTVTRAQLEEIANTKMADLNANDLDAAVKIIAGSARSMGLNVEG</sequence>
<feature type="chain" id="PRO_0000258236" description="Large ribosomal subunit protein uL11">
    <location>
        <begin position="1"/>
        <end position="142"/>
    </location>
</feature>
<name>RL11_HYDCU</name>
<comment type="function">
    <text evidence="1">Forms part of the ribosomal stalk which helps the ribosome interact with GTP-bound translation factors.</text>
</comment>
<comment type="subunit">
    <text evidence="1">Part of the ribosomal stalk of the 50S ribosomal subunit. Interacts with L10 and the large rRNA to form the base of the stalk. L10 forms an elongated spine to which L12 dimers bind in a sequential fashion forming a multimeric L10(L12)X complex.</text>
</comment>
<comment type="PTM">
    <text evidence="1">One or more lysine residues are methylated.</text>
</comment>
<comment type="similarity">
    <text evidence="1">Belongs to the universal ribosomal protein uL11 family.</text>
</comment>
<proteinExistence type="inferred from homology"/>
<reference key="1">
    <citation type="journal article" date="2006" name="PLoS Biol.">
        <title>The genome of deep-sea vent chemolithoautotroph Thiomicrospira crunogena XCL-2.</title>
        <authorList>
            <person name="Scott K.M."/>
            <person name="Sievert S.M."/>
            <person name="Abril F.N."/>
            <person name="Ball L.A."/>
            <person name="Barrett C.J."/>
            <person name="Blake R.A."/>
            <person name="Boller A.J."/>
            <person name="Chain P.S.G."/>
            <person name="Clark J.A."/>
            <person name="Davis C.R."/>
            <person name="Detter C."/>
            <person name="Do K.F."/>
            <person name="Dobrinski K.P."/>
            <person name="Faza B.I."/>
            <person name="Fitzpatrick K.A."/>
            <person name="Freyermuth S.K."/>
            <person name="Harmer T.L."/>
            <person name="Hauser L.J."/>
            <person name="Huegler M."/>
            <person name="Kerfeld C.A."/>
            <person name="Klotz M.G."/>
            <person name="Kong W.W."/>
            <person name="Land M."/>
            <person name="Lapidus A."/>
            <person name="Larimer F.W."/>
            <person name="Longo D.L."/>
            <person name="Lucas S."/>
            <person name="Malfatti S.A."/>
            <person name="Massey S.E."/>
            <person name="Martin D.D."/>
            <person name="McCuddin Z."/>
            <person name="Meyer F."/>
            <person name="Moore J.L."/>
            <person name="Ocampo L.H. Jr."/>
            <person name="Paul J.H."/>
            <person name="Paulsen I.T."/>
            <person name="Reep D.K."/>
            <person name="Ren Q."/>
            <person name="Ross R.L."/>
            <person name="Sato P.Y."/>
            <person name="Thomas P."/>
            <person name="Tinkham L.E."/>
            <person name="Zeruth G.T."/>
        </authorList>
    </citation>
    <scope>NUCLEOTIDE SEQUENCE [LARGE SCALE GENOMIC DNA]</scope>
    <source>
        <strain>DSM 25203 / XCL-2</strain>
    </source>
</reference>
<accession>Q31IZ3</accession>
<dbReference type="EMBL" id="CP000109">
    <property type="protein sequence ID" value="ABB40880.1"/>
    <property type="molecule type" value="Genomic_DNA"/>
</dbReference>
<dbReference type="SMR" id="Q31IZ3"/>
<dbReference type="STRING" id="317025.Tcr_0284"/>
<dbReference type="KEGG" id="tcx:Tcr_0284"/>
<dbReference type="eggNOG" id="COG0080">
    <property type="taxonomic scope" value="Bacteria"/>
</dbReference>
<dbReference type="HOGENOM" id="CLU_074237_2_1_6"/>
<dbReference type="OrthoDB" id="9802408at2"/>
<dbReference type="GO" id="GO:0022625">
    <property type="term" value="C:cytosolic large ribosomal subunit"/>
    <property type="evidence" value="ECO:0007669"/>
    <property type="project" value="TreeGrafter"/>
</dbReference>
<dbReference type="GO" id="GO:0070180">
    <property type="term" value="F:large ribosomal subunit rRNA binding"/>
    <property type="evidence" value="ECO:0007669"/>
    <property type="project" value="UniProtKB-UniRule"/>
</dbReference>
<dbReference type="GO" id="GO:0003735">
    <property type="term" value="F:structural constituent of ribosome"/>
    <property type="evidence" value="ECO:0007669"/>
    <property type="project" value="InterPro"/>
</dbReference>
<dbReference type="GO" id="GO:0006412">
    <property type="term" value="P:translation"/>
    <property type="evidence" value="ECO:0007669"/>
    <property type="project" value="UniProtKB-UniRule"/>
</dbReference>
<dbReference type="CDD" id="cd00349">
    <property type="entry name" value="Ribosomal_L11"/>
    <property type="match status" value="1"/>
</dbReference>
<dbReference type="FunFam" id="1.10.10.250:FF:000001">
    <property type="entry name" value="50S ribosomal protein L11"/>
    <property type="match status" value="1"/>
</dbReference>
<dbReference type="FunFam" id="3.30.1550.10:FF:000001">
    <property type="entry name" value="50S ribosomal protein L11"/>
    <property type="match status" value="1"/>
</dbReference>
<dbReference type="Gene3D" id="1.10.10.250">
    <property type="entry name" value="Ribosomal protein L11, C-terminal domain"/>
    <property type="match status" value="1"/>
</dbReference>
<dbReference type="Gene3D" id="3.30.1550.10">
    <property type="entry name" value="Ribosomal protein L11/L12, N-terminal domain"/>
    <property type="match status" value="1"/>
</dbReference>
<dbReference type="HAMAP" id="MF_00736">
    <property type="entry name" value="Ribosomal_uL11"/>
    <property type="match status" value="1"/>
</dbReference>
<dbReference type="InterPro" id="IPR000911">
    <property type="entry name" value="Ribosomal_uL11"/>
</dbReference>
<dbReference type="InterPro" id="IPR006519">
    <property type="entry name" value="Ribosomal_uL11_bac-typ"/>
</dbReference>
<dbReference type="InterPro" id="IPR020783">
    <property type="entry name" value="Ribosomal_uL11_C"/>
</dbReference>
<dbReference type="InterPro" id="IPR036769">
    <property type="entry name" value="Ribosomal_uL11_C_sf"/>
</dbReference>
<dbReference type="InterPro" id="IPR020785">
    <property type="entry name" value="Ribosomal_uL11_CS"/>
</dbReference>
<dbReference type="InterPro" id="IPR020784">
    <property type="entry name" value="Ribosomal_uL11_N"/>
</dbReference>
<dbReference type="InterPro" id="IPR036796">
    <property type="entry name" value="Ribosomal_uL11_N_sf"/>
</dbReference>
<dbReference type="NCBIfam" id="TIGR01632">
    <property type="entry name" value="L11_bact"/>
    <property type="match status" value="1"/>
</dbReference>
<dbReference type="PANTHER" id="PTHR11661">
    <property type="entry name" value="60S RIBOSOMAL PROTEIN L12"/>
    <property type="match status" value="1"/>
</dbReference>
<dbReference type="PANTHER" id="PTHR11661:SF1">
    <property type="entry name" value="LARGE RIBOSOMAL SUBUNIT PROTEIN UL11M"/>
    <property type="match status" value="1"/>
</dbReference>
<dbReference type="Pfam" id="PF00298">
    <property type="entry name" value="Ribosomal_L11"/>
    <property type="match status" value="1"/>
</dbReference>
<dbReference type="Pfam" id="PF03946">
    <property type="entry name" value="Ribosomal_L11_N"/>
    <property type="match status" value="1"/>
</dbReference>
<dbReference type="SMART" id="SM00649">
    <property type="entry name" value="RL11"/>
    <property type="match status" value="1"/>
</dbReference>
<dbReference type="SUPFAM" id="SSF54747">
    <property type="entry name" value="Ribosomal L11/L12e N-terminal domain"/>
    <property type="match status" value="1"/>
</dbReference>
<dbReference type="SUPFAM" id="SSF46906">
    <property type="entry name" value="Ribosomal protein L11, C-terminal domain"/>
    <property type="match status" value="1"/>
</dbReference>
<dbReference type="PROSITE" id="PS00359">
    <property type="entry name" value="RIBOSOMAL_L11"/>
    <property type="match status" value="1"/>
</dbReference>